<evidence type="ECO:0000250" key="1">
    <source>
        <dbReference type="UniProtKB" id="Q6UWU4"/>
    </source>
</evidence>
<evidence type="ECO:0000255" key="2"/>
<evidence type="ECO:0000305" key="3"/>
<proteinExistence type="evidence at transcript level"/>
<accession>Q99KU6</accession>
<accession>Q6PDQ4</accession>
<accession>Q7TSE2</accession>
<accession>Q7TSE4</accession>
<accession>Q8BST4</accession>
<protein>
    <recommendedName>
        <fullName>Bombesin receptor-activated protein C6orf89 homolog</fullName>
    </recommendedName>
</protein>
<organism>
    <name type="scientific">Mus musculus</name>
    <name type="common">Mouse</name>
    <dbReference type="NCBI Taxonomy" id="10090"/>
    <lineage>
        <taxon>Eukaryota</taxon>
        <taxon>Metazoa</taxon>
        <taxon>Chordata</taxon>
        <taxon>Craniata</taxon>
        <taxon>Vertebrata</taxon>
        <taxon>Euteleostomi</taxon>
        <taxon>Mammalia</taxon>
        <taxon>Eutheria</taxon>
        <taxon>Euarchontoglires</taxon>
        <taxon>Glires</taxon>
        <taxon>Rodentia</taxon>
        <taxon>Myomorpha</taxon>
        <taxon>Muroidea</taxon>
        <taxon>Muridae</taxon>
        <taxon>Murinae</taxon>
        <taxon>Mus</taxon>
        <taxon>Mus</taxon>
    </lineage>
</organism>
<comment type="function">
    <text evidence="1">Exhibits histone deacetylase (HDAC) enhancer properties. May play a role in cell cycle progression and wound repair of bronchial epithelial cells.</text>
</comment>
<comment type="subunit">
    <text evidence="1">Homodimer (By similarity). Interacts with BRS3. Interacts (via N-terminus) with SIN3B.</text>
</comment>
<comment type="subcellular location">
    <subcellularLocation>
        <location evidence="1">Golgi apparatus membrane</location>
        <topology evidence="1">Single-pass type II membrane protein</topology>
    </subcellularLocation>
    <subcellularLocation>
        <location evidence="1">Cytoplasm</location>
    </subcellularLocation>
</comment>
<comment type="PTM">
    <text evidence="1">Glycosylated.</text>
</comment>
<comment type="sequence caution" evidence="3">
    <conflict type="erroneous gene model prediction">
        <sequence resource="EMBL-CDS" id="AAP45201"/>
    </conflict>
</comment>
<keyword id="KW-0963">Cytoplasm</keyword>
<keyword id="KW-0325">Glycoprotein</keyword>
<keyword id="KW-0333">Golgi apparatus</keyword>
<keyword id="KW-0472">Membrane</keyword>
<keyword id="KW-1185">Reference proteome</keyword>
<keyword id="KW-0735">Signal-anchor</keyword>
<keyword id="KW-0812">Transmembrane</keyword>
<keyword id="KW-1133">Transmembrane helix</keyword>
<reference key="1">
    <citation type="journal article" date="2009" name="PLoS Biol.">
        <title>Lineage-specific biology revealed by a finished genome assembly of the mouse.</title>
        <authorList>
            <person name="Church D.M."/>
            <person name="Goodstadt L."/>
            <person name="Hillier L.W."/>
            <person name="Zody M.C."/>
            <person name="Goldstein S."/>
            <person name="She X."/>
            <person name="Bult C.J."/>
            <person name="Agarwala R."/>
            <person name="Cherry J.L."/>
            <person name="DiCuccio M."/>
            <person name="Hlavina W."/>
            <person name="Kapustin Y."/>
            <person name="Meric P."/>
            <person name="Maglott D."/>
            <person name="Birtle Z."/>
            <person name="Marques A.C."/>
            <person name="Graves T."/>
            <person name="Zhou S."/>
            <person name="Teague B."/>
            <person name="Potamousis K."/>
            <person name="Churas C."/>
            <person name="Place M."/>
            <person name="Herschleb J."/>
            <person name="Runnheim R."/>
            <person name="Forrest D."/>
            <person name="Amos-Landgraf J."/>
            <person name="Schwartz D.C."/>
            <person name="Cheng Z."/>
            <person name="Lindblad-Toh K."/>
            <person name="Eichler E.E."/>
            <person name="Ponting C.P."/>
        </authorList>
    </citation>
    <scope>NUCLEOTIDE SEQUENCE [LARGE SCALE GENOMIC DNA]</scope>
    <source>
        <strain>C57BL/6J</strain>
    </source>
</reference>
<reference key="2">
    <citation type="journal article" date="2004" name="Genome Res.">
        <title>The status, quality, and expansion of the NIH full-length cDNA project: the Mammalian Gene Collection (MGC).</title>
        <authorList>
            <consortium name="The MGC Project Team"/>
        </authorList>
    </citation>
    <scope>NUCLEOTIDE SEQUENCE [LARGE SCALE MRNA]</scope>
    <source>
        <strain>Czech II</strain>
        <strain>FVB/N-3</strain>
        <tissue>Mammary tumor</tissue>
    </source>
</reference>
<reference key="3">
    <citation type="journal article" date="2005" name="Science">
        <title>The transcriptional landscape of the mammalian genome.</title>
        <authorList>
            <person name="Carninci P."/>
            <person name="Kasukawa T."/>
            <person name="Katayama S."/>
            <person name="Gough J."/>
            <person name="Frith M.C."/>
            <person name="Maeda N."/>
            <person name="Oyama R."/>
            <person name="Ravasi T."/>
            <person name="Lenhard B."/>
            <person name="Wells C."/>
            <person name="Kodzius R."/>
            <person name="Shimokawa K."/>
            <person name="Bajic V.B."/>
            <person name="Brenner S.E."/>
            <person name="Batalov S."/>
            <person name="Forrest A.R."/>
            <person name="Zavolan M."/>
            <person name="Davis M.J."/>
            <person name="Wilming L.G."/>
            <person name="Aidinis V."/>
            <person name="Allen J.E."/>
            <person name="Ambesi-Impiombato A."/>
            <person name="Apweiler R."/>
            <person name="Aturaliya R.N."/>
            <person name="Bailey T.L."/>
            <person name="Bansal M."/>
            <person name="Baxter L."/>
            <person name="Beisel K.W."/>
            <person name="Bersano T."/>
            <person name="Bono H."/>
            <person name="Chalk A.M."/>
            <person name="Chiu K.P."/>
            <person name="Choudhary V."/>
            <person name="Christoffels A."/>
            <person name="Clutterbuck D.R."/>
            <person name="Crowe M.L."/>
            <person name="Dalla E."/>
            <person name="Dalrymple B.P."/>
            <person name="de Bono B."/>
            <person name="Della Gatta G."/>
            <person name="di Bernardo D."/>
            <person name="Down T."/>
            <person name="Engstrom P."/>
            <person name="Fagiolini M."/>
            <person name="Faulkner G."/>
            <person name="Fletcher C.F."/>
            <person name="Fukushima T."/>
            <person name="Furuno M."/>
            <person name="Futaki S."/>
            <person name="Gariboldi M."/>
            <person name="Georgii-Hemming P."/>
            <person name="Gingeras T.R."/>
            <person name="Gojobori T."/>
            <person name="Green R.E."/>
            <person name="Gustincich S."/>
            <person name="Harbers M."/>
            <person name="Hayashi Y."/>
            <person name="Hensch T.K."/>
            <person name="Hirokawa N."/>
            <person name="Hill D."/>
            <person name="Huminiecki L."/>
            <person name="Iacono M."/>
            <person name="Ikeo K."/>
            <person name="Iwama A."/>
            <person name="Ishikawa T."/>
            <person name="Jakt M."/>
            <person name="Kanapin A."/>
            <person name="Katoh M."/>
            <person name="Kawasawa Y."/>
            <person name="Kelso J."/>
            <person name="Kitamura H."/>
            <person name="Kitano H."/>
            <person name="Kollias G."/>
            <person name="Krishnan S.P."/>
            <person name="Kruger A."/>
            <person name="Kummerfeld S.K."/>
            <person name="Kurochkin I.V."/>
            <person name="Lareau L.F."/>
            <person name="Lazarevic D."/>
            <person name="Lipovich L."/>
            <person name="Liu J."/>
            <person name="Liuni S."/>
            <person name="McWilliam S."/>
            <person name="Madan Babu M."/>
            <person name="Madera M."/>
            <person name="Marchionni L."/>
            <person name="Matsuda H."/>
            <person name="Matsuzawa S."/>
            <person name="Miki H."/>
            <person name="Mignone F."/>
            <person name="Miyake S."/>
            <person name="Morris K."/>
            <person name="Mottagui-Tabar S."/>
            <person name="Mulder N."/>
            <person name="Nakano N."/>
            <person name="Nakauchi H."/>
            <person name="Ng P."/>
            <person name="Nilsson R."/>
            <person name="Nishiguchi S."/>
            <person name="Nishikawa S."/>
            <person name="Nori F."/>
            <person name="Ohara O."/>
            <person name="Okazaki Y."/>
            <person name="Orlando V."/>
            <person name="Pang K.C."/>
            <person name="Pavan W.J."/>
            <person name="Pavesi G."/>
            <person name="Pesole G."/>
            <person name="Petrovsky N."/>
            <person name="Piazza S."/>
            <person name="Reed J."/>
            <person name="Reid J.F."/>
            <person name="Ring B.Z."/>
            <person name="Ringwald M."/>
            <person name="Rost B."/>
            <person name="Ruan Y."/>
            <person name="Salzberg S.L."/>
            <person name="Sandelin A."/>
            <person name="Schneider C."/>
            <person name="Schoenbach C."/>
            <person name="Sekiguchi K."/>
            <person name="Semple C.A."/>
            <person name="Seno S."/>
            <person name="Sessa L."/>
            <person name="Sheng Y."/>
            <person name="Shibata Y."/>
            <person name="Shimada H."/>
            <person name="Shimada K."/>
            <person name="Silva D."/>
            <person name="Sinclair B."/>
            <person name="Sperling S."/>
            <person name="Stupka E."/>
            <person name="Sugiura K."/>
            <person name="Sultana R."/>
            <person name="Takenaka Y."/>
            <person name="Taki K."/>
            <person name="Tammoja K."/>
            <person name="Tan S.L."/>
            <person name="Tang S."/>
            <person name="Taylor M.S."/>
            <person name="Tegner J."/>
            <person name="Teichmann S.A."/>
            <person name="Ueda H.R."/>
            <person name="van Nimwegen E."/>
            <person name="Verardo R."/>
            <person name="Wei C.L."/>
            <person name="Yagi K."/>
            <person name="Yamanishi H."/>
            <person name="Zabarovsky E."/>
            <person name="Zhu S."/>
            <person name="Zimmer A."/>
            <person name="Hide W."/>
            <person name="Bult C."/>
            <person name="Grimmond S.M."/>
            <person name="Teasdale R.D."/>
            <person name="Liu E.T."/>
            <person name="Brusic V."/>
            <person name="Quackenbush J."/>
            <person name="Wahlestedt C."/>
            <person name="Mattick J.S."/>
            <person name="Hume D.A."/>
            <person name="Kai C."/>
            <person name="Sasaki D."/>
            <person name="Tomaru Y."/>
            <person name="Fukuda S."/>
            <person name="Kanamori-Katayama M."/>
            <person name="Suzuki M."/>
            <person name="Aoki J."/>
            <person name="Arakawa T."/>
            <person name="Iida J."/>
            <person name="Imamura K."/>
            <person name="Itoh M."/>
            <person name="Kato T."/>
            <person name="Kawaji H."/>
            <person name="Kawagashira N."/>
            <person name="Kawashima T."/>
            <person name="Kojima M."/>
            <person name="Kondo S."/>
            <person name="Konno H."/>
            <person name="Nakano K."/>
            <person name="Ninomiya N."/>
            <person name="Nishio T."/>
            <person name="Okada M."/>
            <person name="Plessy C."/>
            <person name="Shibata K."/>
            <person name="Shiraki T."/>
            <person name="Suzuki S."/>
            <person name="Tagami M."/>
            <person name="Waki K."/>
            <person name="Watahiki A."/>
            <person name="Okamura-Oho Y."/>
            <person name="Suzuki H."/>
            <person name="Kawai J."/>
            <person name="Hayashizaki Y."/>
        </authorList>
    </citation>
    <scope>NUCLEOTIDE SEQUENCE [LARGE SCALE MRNA] OF 36-348</scope>
    <source>
        <strain>C57BL/6J</strain>
        <tissue>Pituitary</tissue>
    </source>
</reference>
<sequence length="348" mass="39486">MDLAANEISIYDKLSETVDLVRQTGHQCGMSEKAIEKFIRQLLEKNEPQRGPPQYPLLIAVYKVLLTLGLILFTAYFVIQPFSSLAPEPVLSGANSWRSLVHHIRLVSLPITKKYMPENKGVPLQGSQEDKPFPDFDPWSSYNCEQNESEPIPANCTGCAQILPLKVTLPEDTPKNFERLRPLVIKTGQPLSSAEIQSFSCQYPEVTEGFTEGFFTKWWRCFPERWFPFPYPWRRPLNRSQILRELFPVFTQLPFPKDSSLNKCFLIQPEPVVGSKMHKVHDLFTLGSGEAMLQLIPPFQCRTHCQSVAMPIESGDIGYADAAHWKVYIVARGVQPLVICDGTTLSDL</sequence>
<name>CF089_MOUSE</name>
<feature type="chain" id="PRO_0000237622" description="Bombesin receptor-activated protein C6orf89 homolog">
    <location>
        <begin position="1"/>
        <end position="348"/>
    </location>
</feature>
<feature type="topological domain" description="Cytoplasmic" evidence="3">
    <location>
        <begin position="1"/>
        <end position="58"/>
    </location>
</feature>
<feature type="transmembrane region" description="Helical" evidence="2">
    <location>
        <begin position="59"/>
        <end position="79"/>
    </location>
</feature>
<feature type="topological domain" description="Extracellular" evidence="3">
    <location>
        <begin position="80"/>
        <end position="348"/>
    </location>
</feature>
<feature type="sequence conflict" description="In Ref. 2; AAH58575." evidence="3" ref="2">
    <original>P</original>
    <variation>S</variation>
    <location>
        <position position="190"/>
    </location>
</feature>
<feature type="sequence conflict" description="In Ref. 2; AAP45198." evidence="3" ref="2">
    <original>S</original>
    <variation>G</variation>
    <location>
        <position position="198"/>
    </location>
</feature>
<feature type="sequence conflict" description="In Ref. 2; AAP45198." evidence="3" ref="2">
    <original>D</original>
    <variation>E</variation>
    <location>
        <position position="347"/>
    </location>
</feature>
<dbReference type="EMBL" id="AY301264">
    <property type="protein sequence ID" value="AAP45198.1"/>
    <property type="molecule type" value="Genomic_DNA"/>
</dbReference>
<dbReference type="EMBL" id="AY301264">
    <property type="protein sequence ID" value="AAP45201.1"/>
    <property type="status" value="ALT_SEQ"/>
    <property type="molecule type" value="Genomic_DNA"/>
</dbReference>
<dbReference type="EMBL" id="BC004004">
    <property type="protein sequence ID" value="AAH04004.1"/>
    <property type="molecule type" value="mRNA"/>
</dbReference>
<dbReference type="EMBL" id="BC058575">
    <property type="protein sequence ID" value="AAH58575.1"/>
    <property type="molecule type" value="mRNA"/>
</dbReference>
<dbReference type="EMBL" id="AK030596">
    <property type="protein sequence ID" value="BAC27038.1"/>
    <property type="molecule type" value="mRNA"/>
</dbReference>
<dbReference type="CCDS" id="CCDS28594.1"/>
<dbReference type="RefSeq" id="NP_001366006.1">
    <property type="nucleotide sequence ID" value="NM_001379077.1"/>
</dbReference>
<dbReference type="RefSeq" id="NP_085038.3">
    <property type="nucleotide sequence ID" value="NM_030561.3"/>
</dbReference>
<dbReference type="RefSeq" id="XP_006525237.1">
    <property type="nucleotide sequence ID" value="XM_006525174.3"/>
</dbReference>
<dbReference type="SMR" id="Q99KU6"/>
<dbReference type="FunCoup" id="Q99KU6">
    <property type="interactions" value="995"/>
</dbReference>
<dbReference type="STRING" id="10090.ENSMUSP00000157208"/>
<dbReference type="iPTMnet" id="Q99KU6"/>
<dbReference type="PhosphoSitePlus" id="Q99KU6"/>
<dbReference type="PaxDb" id="10090-ENSMUSP00000066224"/>
<dbReference type="Pumba" id="Q99KU6"/>
<dbReference type="Antibodypedia" id="2729">
    <property type="antibodies" value="34 antibodies from 10 providers"/>
</dbReference>
<dbReference type="Ensembl" id="ENSMUST00000064709.13">
    <property type="protein sequence ID" value="ENSMUSP00000066224.6"/>
    <property type="gene ID" value="ENSMUSG00000052712.18"/>
</dbReference>
<dbReference type="Ensembl" id="ENSMUST00000149405.4">
    <property type="protein sequence ID" value="ENSMUSP00000117309.3"/>
    <property type="gene ID" value="ENSMUSG00000052712.18"/>
</dbReference>
<dbReference type="Ensembl" id="ENSMUST00000234256.2">
    <property type="protein sequence ID" value="ENSMUSP00000157363.2"/>
    <property type="gene ID" value="ENSMUSG00000052712.18"/>
</dbReference>
<dbReference type="Ensembl" id="ENSMUST00000234711.2">
    <property type="protein sequence ID" value="ENSMUSP00000157208.2"/>
    <property type="gene ID" value="ENSMUSG00000052712.18"/>
</dbReference>
<dbReference type="Ensembl" id="ENSMUST00000234773.2">
    <property type="protein sequence ID" value="ENSMUSP00000157182.2"/>
    <property type="gene ID" value="ENSMUSG00000052712.18"/>
</dbReference>
<dbReference type="Ensembl" id="ENSMUST00000235023.2">
    <property type="protein sequence ID" value="ENSMUSP00000157274.2"/>
    <property type="gene ID" value="ENSMUSG00000052712.18"/>
</dbReference>
<dbReference type="GeneID" id="80748"/>
<dbReference type="KEGG" id="mmu:80748"/>
<dbReference type="UCSC" id="uc008bsn.2">
    <property type="organism name" value="mouse"/>
</dbReference>
<dbReference type="AGR" id="MGI:2136782"/>
<dbReference type="MGI" id="MGI:2136782">
    <property type="gene designation" value="BC004004"/>
</dbReference>
<dbReference type="VEuPathDB" id="HostDB:ENSMUSG00000052712"/>
<dbReference type="eggNOG" id="ENOG502S363">
    <property type="taxonomic scope" value="Eukaryota"/>
</dbReference>
<dbReference type="GeneTree" id="ENSGT00390000014270"/>
<dbReference type="HOGENOM" id="CLU_796829_0_0_1"/>
<dbReference type="InParanoid" id="Q99KU6"/>
<dbReference type="OMA" id="FMAKGTE"/>
<dbReference type="OrthoDB" id="10036464at2759"/>
<dbReference type="PhylomeDB" id="Q99KU6"/>
<dbReference type="TreeFam" id="TF335525"/>
<dbReference type="BioGRID-ORCS" id="80748">
    <property type="hits" value="3 hits in 76 CRISPR screens"/>
</dbReference>
<dbReference type="PRO" id="PR:Q99KU6"/>
<dbReference type="Proteomes" id="UP000000589">
    <property type="component" value="Chromosome 17"/>
</dbReference>
<dbReference type="RNAct" id="Q99KU6">
    <property type="molecule type" value="protein"/>
</dbReference>
<dbReference type="Bgee" id="ENSMUSG00000052712">
    <property type="expression patterns" value="Expressed in pigmented layer of retina and 254 other cell types or tissues"/>
</dbReference>
<dbReference type="ExpressionAtlas" id="Q99KU6">
    <property type="expression patterns" value="baseline and differential"/>
</dbReference>
<dbReference type="GO" id="GO:0005737">
    <property type="term" value="C:cytoplasm"/>
    <property type="evidence" value="ECO:0000250"/>
    <property type="project" value="UniProtKB"/>
</dbReference>
<dbReference type="GO" id="GO:0000139">
    <property type="term" value="C:Golgi membrane"/>
    <property type="evidence" value="ECO:0000250"/>
    <property type="project" value="UniProtKB"/>
</dbReference>
<dbReference type="GO" id="GO:0030496">
    <property type="term" value="C:midbody"/>
    <property type="evidence" value="ECO:0000250"/>
    <property type="project" value="UniProtKB"/>
</dbReference>
<dbReference type="GO" id="GO:0005886">
    <property type="term" value="C:plasma membrane"/>
    <property type="evidence" value="ECO:0000250"/>
    <property type="project" value="UniProtKB"/>
</dbReference>
<dbReference type="GO" id="GO:0006914">
    <property type="term" value="P:autophagy"/>
    <property type="evidence" value="ECO:0000315"/>
    <property type="project" value="MGI"/>
</dbReference>
<dbReference type="GO" id="GO:0006338">
    <property type="term" value="P:chromatin remodeling"/>
    <property type="evidence" value="ECO:0000250"/>
    <property type="project" value="UniProtKB"/>
</dbReference>
<dbReference type="GO" id="GO:0032963">
    <property type="term" value="P:collagen metabolic process"/>
    <property type="evidence" value="ECO:0000315"/>
    <property type="project" value="MGI"/>
</dbReference>
<dbReference type="GO" id="GO:0097709">
    <property type="term" value="P:connective tissue replacement"/>
    <property type="evidence" value="ECO:0000315"/>
    <property type="project" value="MGI"/>
</dbReference>
<dbReference type="GO" id="GO:0050673">
    <property type="term" value="P:epithelial cell proliferation"/>
    <property type="evidence" value="ECO:0000250"/>
    <property type="project" value="UniProtKB"/>
</dbReference>
<dbReference type="GO" id="GO:0048144">
    <property type="term" value="P:fibroblast proliferation"/>
    <property type="evidence" value="ECO:0000315"/>
    <property type="project" value="MGI"/>
</dbReference>
<dbReference type="GO" id="GO:0045787">
    <property type="term" value="P:positive regulation of cell cycle"/>
    <property type="evidence" value="ECO:0000250"/>
    <property type="project" value="UniProtKB"/>
</dbReference>
<dbReference type="GO" id="GO:1904975">
    <property type="term" value="P:response to bleomycin"/>
    <property type="evidence" value="ECO:0000315"/>
    <property type="project" value="MGI"/>
</dbReference>
<dbReference type="GO" id="GO:0042060">
    <property type="term" value="P:wound healing"/>
    <property type="evidence" value="ECO:0000250"/>
    <property type="project" value="UniProtKB"/>
</dbReference>
<dbReference type="InterPro" id="IPR038757">
    <property type="entry name" value="BRAP"/>
</dbReference>
<dbReference type="PANTHER" id="PTHR35259">
    <property type="entry name" value="BOMBESIN RECEPTOR-ACTIVATED PROTEIN C6ORF89"/>
    <property type="match status" value="1"/>
</dbReference>
<dbReference type="PANTHER" id="PTHR35259:SF1">
    <property type="entry name" value="BOMBESIN RECEPTOR-ACTIVATED PROTEIN C6ORF89"/>
    <property type="match status" value="1"/>
</dbReference>